<gene>
    <name type="primary">CTRB1</name>
    <name type="synonym">CTRB</name>
</gene>
<dbReference type="EC" id="3.4.21.1"/>
<dbReference type="EMBL" id="K01173">
    <property type="protein sequence ID" value="AAA30841.1"/>
    <property type="molecule type" value="mRNA"/>
</dbReference>
<dbReference type="PIR" id="A21195">
    <property type="entry name" value="A21195"/>
</dbReference>
<dbReference type="RefSeq" id="NP_001183984.1">
    <property type="nucleotide sequence ID" value="NM_001197055.1"/>
</dbReference>
<dbReference type="SMR" id="P04813"/>
<dbReference type="FunCoup" id="P04813">
    <property type="interactions" value="41"/>
</dbReference>
<dbReference type="STRING" id="9615.ENSCAFP00000029763"/>
<dbReference type="MEROPS" id="S01.152"/>
<dbReference type="PaxDb" id="9612-ENSCAFP00000032437"/>
<dbReference type="Ensembl" id="ENSCAFT00000036999.3">
    <property type="protein sequence ID" value="ENSCAFP00000032437.2"/>
    <property type="gene ID" value="ENSCAFG00000020084.5"/>
</dbReference>
<dbReference type="Ensembl" id="ENSCAFT00030004451.1">
    <property type="protein sequence ID" value="ENSCAFP00030003946.1"/>
    <property type="gene ID" value="ENSCAFG00030002402.1"/>
</dbReference>
<dbReference type="Ensembl" id="ENSCAFT00040022821.1">
    <property type="protein sequence ID" value="ENSCAFP00040019772.1"/>
    <property type="gene ID" value="ENSCAFG00040012242.1"/>
</dbReference>
<dbReference type="Ensembl" id="ENSCAFT00845043296.1">
    <property type="protein sequence ID" value="ENSCAFP00845033932.1"/>
    <property type="gene ID" value="ENSCAFG00845024500.1"/>
</dbReference>
<dbReference type="GeneID" id="479649"/>
<dbReference type="KEGG" id="cfa:479649"/>
<dbReference type="VEuPathDB" id="HostDB:ENSCAFG00845024500"/>
<dbReference type="eggNOG" id="KOG3627">
    <property type="taxonomic scope" value="Eukaryota"/>
</dbReference>
<dbReference type="GeneTree" id="ENSGT00940000153216"/>
<dbReference type="HOGENOM" id="CLU_006842_7_6_1"/>
<dbReference type="InParanoid" id="P04813"/>
<dbReference type="OMA" id="WLLSYCA"/>
<dbReference type="OrthoDB" id="5918597at2759"/>
<dbReference type="TreeFam" id="TF330455"/>
<dbReference type="Reactome" id="R-CFA-1592389">
    <property type="pathway name" value="Activation of Matrix Metalloproteinases"/>
</dbReference>
<dbReference type="Reactome" id="R-CFA-9758881">
    <property type="pathway name" value="Uptake of dietary cobalamins into enterocytes"/>
</dbReference>
<dbReference type="Proteomes" id="UP000002254">
    <property type="component" value="Chromosome 5"/>
</dbReference>
<dbReference type="Proteomes" id="UP000694429">
    <property type="component" value="Chromosome 5"/>
</dbReference>
<dbReference type="Proteomes" id="UP000694542">
    <property type="component" value="Chromosome 5"/>
</dbReference>
<dbReference type="Proteomes" id="UP000805418">
    <property type="component" value="Chromosome 5"/>
</dbReference>
<dbReference type="Bgee" id="ENSCAFG00000020084">
    <property type="expression patterns" value="Expressed in pancreas and 45 other cell types or tissues"/>
</dbReference>
<dbReference type="GO" id="GO:0005576">
    <property type="term" value="C:extracellular region"/>
    <property type="evidence" value="ECO:0007669"/>
    <property type="project" value="UniProtKB-SubCell"/>
</dbReference>
<dbReference type="GO" id="GO:0004252">
    <property type="term" value="F:serine-type endopeptidase activity"/>
    <property type="evidence" value="ECO:0000318"/>
    <property type="project" value="GO_Central"/>
</dbReference>
<dbReference type="GO" id="GO:0007586">
    <property type="term" value="P:digestion"/>
    <property type="evidence" value="ECO:0007669"/>
    <property type="project" value="UniProtKB-KW"/>
</dbReference>
<dbReference type="GO" id="GO:0006508">
    <property type="term" value="P:proteolysis"/>
    <property type="evidence" value="ECO:0000318"/>
    <property type="project" value="GO_Central"/>
</dbReference>
<dbReference type="CDD" id="cd00190">
    <property type="entry name" value="Tryp_SPc"/>
    <property type="match status" value="1"/>
</dbReference>
<dbReference type="FunFam" id="2.40.10.10:FF:000118">
    <property type="entry name" value="Chymotrypsinogen A"/>
    <property type="match status" value="1"/>
</dbReference>
<dbReference type="FunFam" id="2.40.10.10:FF:000176">
    <property type="entry name" value="Chymotrypsinogen A"/>
    <property type="match status" value="1"/>
</dbReference>
<dbReference type="Gene3D" id="2.40.10.10">
    <property type="entry name" value="Trypsin-like serine proteases"/>
    <property type="match status" value="1"/>
</dbReference>
<dbReference type="InterPro" id="IPR009003">
    <property type="entry name" value="Peptidase_S1_PA"/>
</dbReference>
<dbReference type="InterPro" id="IPR043504">
    <property type="entry name" value="Peptidase_S1_PA_chymotrypsin"/>
</dbReference>
<dbReference type="InterPro" id="IPR001314">
    <property type="entry name" value="Peptidase_S1A"/>
</dbReference>
<dbReference type="InterPro" id="IPR001254">
    <property type="entry name" value="Trypsin_dom"/>
</dbReference>
<dbReference type="InterPro" id="IPR018114">
    <property type="entry name" value="TRYPSIN_HIS"/>
</dbReference>
<dbReference type="InterPro" id="IPR033116">
    <property type="entry name" value="TRYPSIN_SER"/>
</dbReference>
<dbReference type="PANTHER" id="PTHR24250">
    <property type="entry name" value="CHYMOTRYPSIN-RELATED"/>
    <property type="match status" value="1"/>
</dbReference>
<dbReference type="PANTHER" id="PTHR24250:SF65">
    <property type="entry name" value="CHYMOTRYPSINOGEN B"/>
    <property type="match status" value="1"/>
</dbReference>
<dbReference type="Pfam" id="PF00089">
    <property type="entry name" value="Trypsin"/>
    <property type="match status" value="1"/>
</dbReference>
<dbReference type="PRINTS" id="PR00722">
    <property type="entry name" value="CHYMOTRYPSIN"/>
</dbReference>
<dbReference type="SMART" id="SM00020">
    <property type="entry name" value="Tryp_SPc"/>
    <property type="match status" value="1"/>
</dbReference>
<dbReference type="SUPFAM" id="SSF50494">
    <property type="entry name" value="Trypsin-like serine proteases"/>
    <property type="match status" value="1"/>
</dbReference>
<dbReference type="PROSITE" id="PS50240">
    <property type="entry name" value="TRYPSIN_DOM"/>
    <property type="match status" value="1"/>
</dbReference>
<dbReference type="PROSITE" id="PS00134">
    <property type="entry name" value="TRYPSIN_HIS"/>
    <property type="match status" value="1"/>
</dbReference>
<dbReference type="PROSITE" id="PS00135">
    <property type="entry name" value="TRYPSIN_SER"/>
    <property type="match status" value="1"/>
</dbReference>
<organism>
    <name type="scientific">Canis lupus familiaris</name>
    <name type="common">Dog</name>
    <name type="synonym">Canis familiaris</name>
    <dbReference type="NCBI Taxonomy" id="9615"/>
    <lineage>
        <taxon>Eukaryota</taxon>
        <taxon>Metazoa</taxon>
        <taxon>Chordata</taxon>
        <taxon>Craniata</taxon>
        <taxon>Vertebrata</taxon>
        <taxon>Euteleostomi</taxon>
        <taxon>Mammalia</taxon>
        <taxon>Eutheria</taxon>
        <taxon>Laurasiatheria</taxon>
        <taxon>Carnivora</taxon>
        <taxon>Caniformia</taxon>
        <taxon>Canidae</taxon>
        <taxon>Canis</taxon>
    </lineage>
</organism>
<keyword id="KW-0222">Digestion</keyword>
<keyword id="KW-1015">Disulfide bond</keyword>
<keyword id="KW-0378">Hydrolase</keyword>
<keyword id="KW-0597">Phosphoprotein</keyword>
<keyword id="KW-0645">Protease</keyword>
<keyword id="KW-1185">Reference proteome</keyword>
<keyword id="KW-0964">Secreted</keyword>
<keyword id="KW-0720">Serine protease</keyword>
<keyword id="KW-0732">Signal</keyword>
<keyword id="KW-0865">Zymogen</keyword>
<sequence length="263" mass="27787">MAFLWLLSCFALLGTAFGCGVPAIQPVLSGLSRIVNGEDAVPGSWPWQVSLQDSTGFHFCGGSLISEDWVVTAAHCGVRTTHQVVAGEFDQGSDAESIQVLKIAKVFKNPKFNMFTINNDITLLKLATPARFSKTVSAVCLPQATDDFPAGTLCVTTGWGLTKHTNANTPDKLQQAALPLLSNAECKKFWGSKITDLMVCAGASGVSSCMGDSGGPLVCQKDGAWTLVGIVSWGSGTCSTSTPGVYARVTKLIPWVQQILQAN</sequence>
<name>CTR2_CANLF</name>
<protein>
    <recommendedName>
        <fullName>Chymotrypsinogen 2</fullName>
        <ecNumber>3.4.21.1</ecNumber>
    </recommendedName>
    <component>
        <recommendedName>
            <fullName>Chymotrypsin 2 chain A</fullName>
        </recommendedName>
    </component>
    <component>
        <recommendedName>
            <fullName>Chymotrypsin 2 chain B</fullName>
        </recommendedName>
    </component>
    <component>
        <recommendedName>
            <fullName>Chymotrypsin 2 chain C</fullName>
        </recommendedName>
    </component>
</protein>
<proteinExistence type="evidence at transcript level"/>
<feature type="signal peptide">
    <location>
        <begin position="1"/>
        <end position="18"/>
    </location>
</feature>
<feature type="chain" id="PRO_0000027634" description="Chymotrypsinogen 2">
    <location>
        <begin position="19"/>
        <end position="263"/>
    </location>
</feature>
<feature type="chain" id="PRO_0000027635" description="Chymotrypsin 2 chain A">
    <location>
        <begin position="19"/>
        <end position="31"/>
    </location>
</feature>
<feature type="chain" id="PRO_0000027636" description="Chymotrypsin 2 chain B">
    <location>
        <begin position="34"/>
        <end position="164"/>
    </location>
</feature>
<feature type="chain" id="PRO_0000027637" description="Chymotrypsin 2 chain C">
    <location>
        <begin position="167"/>
        <end position="263"/>
    </location>
</feature>
<feature type="domain" description="Peptidase S1" evidence="2">
    <location>
        <begin position="34"/>
        <end position="261"/>
    </location>
</feature>
<feature type="active site" description="Charge relay system">
    <location>
        <position position="75"/>
    </location>
</feature>
<feature type="active site" description="Charge relay system">
    <location>
        <position position="120"/>
    </location>
</feature>
<feature type="active site" description="Charge relay system">
    <location>
        <position position="213"/>
    </location>
</feature>
<feature type="modified residue" description="Phosphoserine" evidence="1">
    <location>
        <position position="93"/>
    </location>
</feature>
<feature type="disulfide bond" evidence="2">
    <location>
        <begin position="19"/>
        <end position="140"/>
    </location>
</feature>
<feature type="disulfide bond" evidence="2">
    <location>
        <begin position="60"/>
        <end position="76"/>
    </location>
</feature>
<feature type="disulfide bond" evidence="2">
    <location>
        <begin position="154"/>
        <end position="219"/>
    </location>
</feature>
<feature type="disulfide bond" evidence="2">
    <location>
        <begin position="186"/>
        <end position="200"/>
    </location>
</feature>
<feature type="disulfide bond" evidence="2">
    <location>
        <begin position="209"/>
        <end position="238"/>
    </location>
</feature>
<reference key="1">
    <citation type="journal article" date="1983" name="Proc. Natl. Acad. Sci. U.S.A.">
        <title>Identification of cDNA clones encoding secretory isoenzyme forms: sequence determination of canine pancreatic prechymotrypsinogen 2 mRNA.</title>
        <authorList>
            <person name="Pinsky S.D."/>
            <person name="Laforge K.S."/>
            <person name="Luc V."/>
            <person name="Scheele G."/>
        </authorList>
    </citation>
    <scope>NUCLEOTIDE SEQUENCE [MRNA]</scope>
</reference>
<comment type="catalytic activity">
    <reaction evidence="3 4">
        <text>Preferential cleavage: Tyr-|-Xaa, Trp-|-Xaa, Phe-|-Xaa, Leu-|-Xaa.</text>
        <dbReference type="EC" id="3.4.21.1"/>
    </reaction>
</comment>
<comment type="subcellular location">
    <subcellularLocation>
        <location>Secreted</location>
        <location>Extracellular space</location>
    </subcellularLocation>
</comment>
<comment type="similarity">
    <text evidence="2">Belongs to the peptidase S1 family.</text>
</comment>
<accession>P04813</accession>
<evidence type="ECO:0000250" key="1">
    <source>
        <dbReference type="UniProtKB" id="Q9CR35"/>
    </source>
</evidence>
<evidence type="ECO:0000255" key="2">
    <source>
        <dbReference type="PROSITE-ProRule" id="PRU00274"/>
    </source>
</evidence>
<evidence type="ECO:0000255" key="3">
    <source>
        <dbReference type="PROSITE-ProRule" id="PRU10078"/>
    </source>
</evidence>
<evidence type="ECO:0000255" key="4">
    <source>
        <dbReference type="PROSITE-ProRule" id="PRU10079"/>
    </source>
</evidence>